<protein>
    <recommendedName>
        <fullName evidence="1">Glutamate racemase</fullName>
        <ecNumber evidence="1">5.1.1.3</ecNumber>
    </recommendedName>
</protein>
<reference key="1">
    <citation type="submission" date="2007-07" db="EMBL/GenBank/DDBJ databases">
        <title>Complete sequence of chromosome of Shewanella baltica OS185.</title>
        <authorList>
            <consortium name="US DOE Joint Genome Institute"/>
            <person name="Copeland A."/>
            <person name="Lucas S."/>
            <person name="Lapidus A."/>
            <person name="Barry K."/>
            <person name="Glavina del Rio T."/>
            <person name="Dalin E."/>
            <person name="Tice H."/>
            <person name="Pitluck S."/>
            <person name="Sims D."/>
            <person name="Brettin T."/>
            <person name="Bruce D."/>
            <person name="Detter J.C."/>
            <person name="Han C."/>
            <person name="Schmutz J."/>
            <person name="Larimer F."/>
            <person name="Land M."/>
            <person name="Hauser L."/>
            <person name="Kyrpides N."/>
            <person name="Mikhailova N."/>
            <person name="Brettar I."/>
            <person name="Rodrigues J."/>
            <person name="Konstantinidis K."/>
            <person name="Tiedje J."/>
            <person name="Richardson P."/>
        </authorList>
    </citation>
    <scope>NUCLEOTIDE SEQUENCE [LARGE SCALE GENOMIC DNA]</scope>
    <source>
        <strain>OS185</strain>
    </source>
</reference>
<keyword id="KW-0133">Cell shape</keyword>
<keyword id="KW-0961">Cell wall biogenesis/degradation</keyword>
<keyword id="KW-0413">Isomerase</keyword>
<keyword id="KW-0573">Peptidoglycan synthesis</keyword>
<gene>
    <name evidence="1" type="primary">murI</name>
    <name type="ordered locus">Shew185_0177</name>
</gene>
<feature type="chain" id="PRO_1000047604" description="Glutamate racemase">
    <location>
        <begin position="1"/>
        <end position="274"/>
    </location>
</feature>
<feature type="active site" description="Proton donor/acceptor" evidence="1">
    <location>
        <position position="73"/>
    </location>
</feature>
<feature type="active site" description="Proton donor/acceptor" evidence="1">
    <location>
        <position position="183"/>
    </location>
</feature>
<feature type="binding site" evidence="1">
    <location>
        <begin position="9"/>
        <end position="10"/>
    </location>
    <ligand>
        <name>substrate</name>
    </ligand>
</feature>
<feature type="binding site" evidence="1">
    <location>
        <begin position="41"/>
        <end position="42"/>
    </location>
    <ligand>
        <name>substrate</name>
    </ligand>
</feature>
<feature type="binding site" evidence="1">
    <location>
        <begin position="74"/>
        <end position="75"/>
    </location>
    <ligand>
        <name>substrate</name>
    </ligand>
</feature>
<feature type="binding site" evidence="1">
    <location>
        <begin position="184"/>
        <end position="185"/>
    </location>
    <ligand>
        <name>substrate</name>
    </ligand>
</feature>
<organism>
    <name type="scientific">Shewanella baltica (strain OS185)</name>
    <dbReference type="NCBI Taxonomy" id="402882"/>
    <lineage>
        <taxon>Bacteria</taxon>
        <taxon>Pseudomonadati</taxon>
        <taxon>Pseudomonadota</taxon>
        <taxon>Gammaproteobacteria</taxon>
        <taxon>Alteromonadales</taxon>
        <taxon>Shewanellaceae</taxon>
        <taxon>Shewanella</taxon>
    </lineage>
</organism>
<proteinExistence type="inferred from homology"/>
<accession>A6WHQ9</accession>
<evidence type="ECO:0000255" key="1">
    <source>
        <dbReference type="HAMAP-Rule" id="MF_00258"/>
    </source>
</evidence>
<name>MURI_SHEB8</name>
<comment type="function">
    <text evidence="1">Provides the (R)-glutamate required for cell wall biosynthesis.</text>
</comment>
<comment type="catalytic activity">
    <reaction evidence="1">
        <text>L-glutamate = D-glutamate</text>
        <dbReference type="Rhea" id="RHEA:12813"/>
        <dbReference type="ChEBI" id="CHEBI:29985"/>
        <dbReference type="ChEBI" id="CHEBI:29986"/>
        <dbReference type="EC" id="5.1.1.3"/>
    </reaction>
</comment>
<comment type="pathway">
    <text evidence="1">Cell wall biogenesis; peptidoglycan biosynthesis.</text>
</comment>
<comment type="similarity">
    <text evidence="1">Belongs to the aspartate/glutamate racemases family.</text>
</comment>
<dbReference type="EC" id="5.1.1.3" evidence="1"/>
<dbReference type="EMBL" id="CP000753">
    <property type="protein sequence ID" value="ABS06348.1"/>
    <property type="molecule type" value="Genomic_DNA"/>
</dbReference>
<dbReference type="RefSeq" id="WP_011982111.1">
    <property type="nucleotide sequence ID" value="NC_009665.1"/>
</dbReference>
<dbReference type="SMR" id="A6WHQ9"/>
<dbReference type="KEGG" id="sbm:Shew185_0177"/>
<dbReference type="HOGENOM" id="CLU_052344_2_0_6"/>
<dbReference type="UniPathway" id="UPA00219"/>
<dbReference type="GO" id="GO:0008881">
    <property type="term" value="F:glutamate racemase activity"/>
    <property type="evidence" value="ECO:0007669"/>
    <property type="project" value="UniProtKB-UniRule"/>
</dbReference>
<dbReference type="GO" id="GO:0071555">
    <property type="term" value="P:cell wall organization"/>
    <property type="evidence" value="ECO:0007669"/>
    <property type="project" value="UniProtKB-KW"/>
</dbReference>
<dbReference type="GO" id="GO:0009252">
    <property type="term" value="P:peptidoglycan biosynthetic process"/>
    <property type="evidence" value="ECO:0007669"/>
    <property type="project" value="UniProtKB-UniRule"/>
</dbReference>
<dbReference type="GO" id="GO:0008360">
    <property type="term" value="P:regulation of cell shape"/>
    <property type="evidence" value="ECO:0007669"/>
    <property type="project" value="UniProtKB-KW"/>
</dbReference>
<dbReference type="FunFam" id="3.40.50.1860:FF:000001">
    <property type="entry name" value="Glutamate racemase"/>
    <property type="match status" value="1"/>
</dbReference>
<dbReference type="Gene3D" id="3.40.50.1860">
    <property type="match status" value="2"/>
</dbReference>
<dbReference type="HAMAP" id="MF_00258">
    <property type="entry name" value="Glu_racemase"/>
    <property type="match status" value="1"/>
</dbReference>
<dbReference type="InterPro" id="IPR015942">
    <property type="entry name" value="Asp/Glu/hydantoin_racemase"/>
</dbReference>
<dbReference type="InterPro" id="IPR001920">
    <property type="entry name" value="Asp/Glu_race"/>
</dbReference>
<dbReference type="InterPro" id="IPR018187">
    <property type="entry name" value="Asp/Glu_racemase_AS_1"/>
</dbReference>
<dbReference type="InterPro" id="IPR033134">
    <property type="entry name" value="Asp/Glu_racemase_AS_2"/>
</dbReference>
<dbReference type="InterPro" id="IPR004391">
    <property type="entry name" value="Glu_race"/>
</dbReference>
<dbReference type="NCBIfam" id="TIGR00067">
    <property type="entry name" value="glut_race"/>
    <property type="match status" value="1"/>
</dbReference>
<dbReference type="PANTHER" id="PTHR21198">
    <property type="entry name" value="GLUTAMATE RACEMASE"/>
    <property type="match status" value="1"/>
</dbReference>
<dbReference type="PANTHER" id="PTHR21198:SF2">
    <property type="entry name" value="GLUTAMATE RACEMASE"/>
    <property type="match status" value="1"/>
</dbReference>
<dbReference type="Pfam" id="PF01177">
    <property type="entry name" value="Asp_Glu_race"/>
    <property type="match status" value="1"/>
</dbReference>
<dbReference type="SUPFAM" id="SSF53681">
    <property type="entry name" value="Aspartate/glutamate racemase"/>
    <property type="match status" value="2"/>
</dbReference>
<dbReference type="PROSITE" id="PS00923">
    <property type="entry name" value="ASP_GLU_RACEMASE_1"/>
    <property type="match status" value="1"/>
</dbReference>
<dbReference type="PROSITE" id="PS00924">
    <property type="entry name" value="ASP_GLU_RACEMASE_2"/>
    <property type="match status" value="1"/>
</dbReference>
<sequence>MSRPILVFDSGIGGLSVLAEIRKSLPHSDYCYLFDNARLPYGELEEQVLIAGCVALVCDLVARTNAMIVVVACNTASTVVLPALRANLSIPVVGVVPAIKPAAQMSKSKRIGLLATPGTVKRHYTHELISQFADDCHVELFGCSELVMMAEQKIATGEMDMHRLADLLAPVVAAQLDVLVLGCTHFPMIQAELQQVLGAGVTLMDSGAAIAKRVVTLLTQQNLIVEQRRVTNEREAVGQSAMQAFYTKAEISEGLTTTLIDCGFSTIERITTTN</sequence>